<accession>Q4UP19</accession>
<proteinExistence type="inferred from homology"/>
<evidence type="ECO:0000255" key="1">
    <source>
        <dbReference type="HAMAP-Rule" id="MF_01521"/>
    </source>
</evidence>
<sequence>MSPLSIVLLGFAMSTDAFAAAIGKGAAMRRPRWRDAVRAGLVFGCIEAITPVIGWMLGRAASDYLAAFDHWIAFGLLGALGAHMIVAGLRNESEVDEALRDTPKRYGLLALAATGFATSIDAMAVGVSLAFLDVHIGVVAAVVGLCTLSMVTAGVMLGRALGALIGKRAEILGGVILILIGSTILYEHLSGAA</sequence>
<keyword id="KW-0997">Cell inner membrane</keyword>
<keyword id="KW-1003">Cell membrane</keyword>
<keyword id="KW-0406">Ion transport</keyword>
<keyword id="KW-0464">Manganese</keyword>
<keyword id="KW-0472">Membrane</keyword>
<keyword id="KW-0812">Transmembrane</keyword>
<keyword id="KW-1133">Transmembrane helix</keyword>
<keyword id="KW-0813">Transport</keyword>
<name>MNTP_XANC8</name>
<organism>
    <name type="scientific">Xanthomonas campestris pv. campestris (strain 8004)</name>
    <dbReference type="NCBI Taxonomy" id="314565"/>
    <lineage>
        <taxon>Bacteria</taxon>
        <taxon>Pseudomonadati</taxon>
        <taxon>Pseudomonadota</taxon>
        <taxon>Gammaproteobacteria</taxon>
        <taxon>Lysobacterales</taxon>
        <taxon>Lysobacteraceae</taxon>
        <taxon>Xanthomonas</taxon>
    </lineage>
</organism>
<dbReference type="EMBL" id="CP000050">
    <property type="protein sequence ID" value="AAY51204.1"/>
    <property type="molecule type" value="Genomic_DNA"/>
</dbReference>
<dbReference type="RefSeq" id="WP_011039144.1">
    <property type="nucleotide sequence ID" value="NZ_CP155948.1"/>
</dbReference>
<dbReference type="KEGG" id="xcb:XC_4166"/>
<dbReference type="HOGENOM" id="CLU_096410_0_0_6"/>
<dbReference type="Proteomes" id="UP000000420">
    <property type="component" value="Chromosome"/>
</dbReference>
<dbReference type="GO" id="GO:0005886">
    <property type="term" value="C:plasma membrane"/>
    <property type="evidence" value="ECO:0007669"/>
    <property type="project" value="UniProtKB-SubCell"/>
</dbReference>
<dbReference type="GO" id="GO:0005384">
    <property type="term" value="F:manganese ion transmembrane transporter activity"/>
    <property type="evidence" value="ECO:0007669"/>
    <property type="project" value="UniProtKB-UniRule"/>
</dbReference>
<dbReference type="HAMAP" id="MF_01521">
    <property type="entry name" value="MntP_pump"/>
    <property type="match status" value="1"/>
</dbReference>
<dbReference type="InterPro" id="IPR003810">
    <property type="entry name" value="Mntp/YtaF"/>
</dbReference>
<dbReference type="InterPro" id="IPR022929">
    <property type="entry name" value="Put_MntP"/>
</dbReference>
<dbReference type="PANTHER" id="PTHR35529">
    <property type="entry name" value="MANGANESE EFFLUX PUMP MNTP-RELATED"/>
    <property type="match status" value="1"/>
</dbReference>
<dbReference type="PANTHER" id="PTHR35529:SF1">
    <property type="entry name" value="MANGANESE EFFLUX PUMP MNTP-RELATED"/>
    <property type="match status" value="1"/>
</dbReference>
<dbReference type="Pfam" id="PF02659">
    <property type="entry name" value="Mntp"/>
    <property type="match status" value="1"/>
</dbReference>
<reference key="1">
    <citation type="journal article" date="2005" name="Genome Res.">
        <title>Comparative and functional genomic analyses of the pathogenicity of phytopathogen Xanthomonas campestris pv. campestris.</title>
        <authorList>
            <person name="Qian W."/>
            <person name="Jia Y."/>
            <person name="Ren S.-X."/>
            <person name="He Y.-Q."/>
            <person name="Feng J.-X."/>
            <person name="Lu L.-F."/>
            <person name="Sun Q."/>
            <person name="Ying G."/>
            <person name="Tang D.-J."/>
            <person name="Tang H."/>
            <person name="Wu W."/>
            <person name="Hao P."/>
            <person name="Wang L."/>
            <person name="Jiang B.-L."/>
            <person name="Zeng S."/>
            <person name="Gu W.-Y."/>
            <person name="Lu G."/>
            <person name="Rong L."/>
            <person name="Tian Y."/>
            <person name="Yao Z."/>
            <person name="Fu G."/>
            <person name="Chen B."/>
            <person name="Fang R."/>
            <person name="Qiang B."/>
            <person name="Chen Z."/>
            <person name="Zhao G.-P."/>
            <person name="Tang J.-L."/>
            <person name="He C."/>
        </authorList>
    </citation>
    <scope>NUCLEOTIDE SEQUENCE [LARGE SCALE GENOMIC DNA]</scope>
    <source>
        <strain>8004</strain>
    </source>
</reference>
<comment type="function">
    <text evidence="1">Probably functions as a manganese efflux pump.</text>
</comment>
<comment type="subcellular location">
    <subcellularLocation>
        <location evidence="1">Cell inner membrane</location>
        <topology evidence="1">Multi-pass membrane protein</topology>
    </subcellularLocation>
</comment>
<comment type="similarity">
    <text evidence="1">Belongs to the MntP (TC 9.B.29) family.</text>
</comment>
<feature type="chain" id="PRO_0000296941" description="Putative manganese efflux pump MntP">
    <location>
        <begin position="1"/>
        <end position="193"/>
    </location>
</feature>
<feature type="transmembrane region" description="Helical" evidence="1">
    <location>
        <begin position="3"/>
        <end position="23"/>
    </location>
</feature>
<feature type="transmembrane region" description="Helical" evidence="1">
    <location>
        <begin position="37"/>
        <end position="57"/>
    </location>
</feature>
<feature type="transmembrane region" description="Helical" evidence="1">
    <location>
        <begin position="66"/>
        <end position="86"/>
    </location>
</feature>
<feature type="transmembrane region" description="Helical" evidence="1">
    <location>
        <begin position="109"/>
        <end position="131"/>
    </location>
</feature>
<feature type="transmembrane region" description="Helical" evidence="1">
    <location>
        <begin position="146"/>
        <end position="166"/>
    </location>
</feature>
<feature type="transmembrane region" description="Helical" evidence="1">
    <location>
        <begin position="171"/>
        <end position="191"/>
    </location>
</feature>
<gene>
    <name evidence="1" type="primary">mntP</name>
    <name type="ordered locus">XC_4166</name>
</gene>
<protein>
    <recommendedName>
        <fullName evidence="1">Putative manganese efflux pump MntP</fullName>
    </recommendedName>
</protein>